<name>SUCC_BACCN</name>
<dbReference type="EC" id="6.2.1.5" evidence="1"/>
<dbReference type="EMBL" id="CP000764">
    <property type="protein sequence ID" value="ABS22724.1"/>
    <property type="molecule type" value="Genomic_DNA"/>
</dbReference>
<dbReference type="RefSeq" id="WP_012094929.1">
    <property type="nucleotide sequence ID" value="NC_009674.1"/>
</dbReference>
<dbReference type="SMR" id="A7GRG6"/>
<dbReference type="STRING" id="315749.Bcer98_2488"/>
<dbReference type="GeneID" id="33897743"/>
<dbReference type="KEGG" id="bcy:Bcer98_2488"/>
<dbReference type="eggNOG" id="COG0045">
    <property type="taxonomic scope" value="Bacteria"/>
</dbReference>
<dbReference type="HOGENOM" id="CLU_037430_0_2_9"/>
<dbReference type="OrthoDB" id="9802602at2"/>
<dbReference type="UniPathway" id="UPA00223">
    <property type="reaction ID" value="UER00999"/>
</dbReference>
<dbReference type="Proteomes" id="UP000002300">
    <property type="component" value="Chromosome"/>
</dbReference>
<dbReference type="GO" id="GO:0005829">
    <property type="term" value="C:cytosol"/>
    <property type="evidence" value="ECO:0007669"/>
    <property type="project" value="TreeGrafter"/>
</dbReference>
<dbReference type="GO" id="GO:0042709">
    <property type="term" value="C:succinate-CoA ligase complex"/>
    <property type="evidence" value="ECO:0007669"/>
    <property type="project" value="TreeGrafter"/>
</dbReference>
<dbReference type="GO" id="GO:0005524">
    <property type="term" value="F:ATP binding"/>
    <property type="evidence" value="ECO:0007669"/>
    <property type="project" value="UniProtKB-UniRule"/>
</dbReference>
<dbReference type="GO" id="GO:0000287">
    <property type="term" value="F:magnesium ion binding"/>
    <property type="evidence" value="ECO:0007669"/>
    <property type="project" value="UniProtKB-UniRule"/>
</dbReference>
<dbReference type="GO" id="GO:0004775">
    <property type="term" value="F:succinate-CoA ligase (ADP-forming) activity"/>
    <property type="evidence" value="ECO:0007669"/>
    <property type="project" value="UniProtKB-UniRule"/>
</dbReference>
<dbReference type="GO" id="GO:0004776">
    <property type="term" value="F:succinate-CoA ligase (GDP-forming) activity"/>
    <property type="evidence" value="ECO:0007669"/>
    <property type="project" value="RHEA"/>
</dbReference>
<dbReference type="GO" id="GO:0006104">
    <property type="term" value="P:succinyl-CoA metabolic process"/>
    <property type="evidence" value="ECO:0007669"/>
    <property type="project" value="TreeGrafter"/>
</dbReference>
<dbReference type="GO" id="GO:0006099">
    <property type="term" value="P:tricarboxylic acid cycle"/>
    <property type="evidence" value="ECO:0007669"/>
    <property type="project" value="UniProtKB-UniRule"/>
</dbReference>
<dbReference type="FunFam" id="3.30.1490.20:FF:000002">
    <property type="entry name" value="Succinate--CoA ligase [ADP-forming] subunit beta"/>
    <property type="match status" value="1"/>
</dbReference>
<dbReference type="FunFam" id="3.30.470.20:FF:000002">
    <property type="entry name" value="Succinate--CoA ligase [ADP-forming] subunit beta"/>
    <property type="match status" value="1"/>
</dbReference>
<dbReference type="FunFam" id="3.40.50.261:FF:000001">
    <property type="entry name" value="Succinate--CoA ligase [ADP-forming] subunit beta"/>
    <property type="match status" value="1"/>
</dbReference>
<dbReference type="Gene3D" id="3.30.1490.20">
    <property type="entry name" value="ATP-grasp fold, A domain"/>
    <property type="match status" value="1"/>
</dbReference>
<dbReference type="Gene3D" id="3.30.470.20">
    <property type="entry name" value="ATP-grasp fold, B domain"/>
    <property type="match status" value="1"/>
</dbReference>
<dbReference type="Gene3D" id="3.40.50.261">
    <property type="entry name" value="Succinyl-CoA synthetase domains"/>
    <property type="match status" value="1"/>
</dbReference>
<dbReference type="HAMAP" id="MF_00558">
    <property type="entry name" value="Succ_CoA_beta"/>
    <property type="match status" value="1"/>
</dbReference>
<dbReference type="InterPro" id="IPR011761">
    <property type="entry name" value="ATP-grasp"/>
</dbReference>
<dbReference type="InterPro" id="IPR013650">
    <property type="entry name" value="ATP-grasp_succ-CoA_synth-type"/>
</dbReference>
<dbReference type="InterPro" id="IPR013815">
    <property type="entry name" value="ATP_grasp_subdomain_1"/>
</dbReference>
<dbReference type="InterPro" id="IPR005811">
    <property type="entry name" value="SUCC_ACL_C"/>
</dbReference>
<dbReference type="InterPro" id="IPR005809">
    <property type="entry name" value="Succ_CoA_ligase-like_bsu"/>
</dbReference>
<dbReference type="InterPro" id="IPR016102">
    <property type="entry name" value="Succinyl-CoA_synth-like"/>
</dbReference>
<dbReference type="NCBIfam" id="NF001913">
    <property type="entry name" value="PRK00696.1"/>
    <property type="match status" value="1"/>
</dbReference>
<dbReference type="NCBIfam" id="TIGR01016">
    <property type="entry name" value="sucCoAbeta"/>
    <property type="match status" value="1"/>
</dbReference>
<dbReference type="PANTHER" id="PTHR11815:SF10">
    <property type="entry name" value="SUCCINATE--COA LIGASE [GDP-FORMING] SUBUNIT BETA, MITOCHONDRIAL"/>
    <property type="match status" value="1"/>
</dbReference>
<dbReference type="PANTHER" id="PTHR11815">
    <property type="entry name" value="SUCCINYL-COA SYNTHETASE BETA CHAIN"/>
    <property type="match status" value="1"/>
</dbReference>
<dbReference type="Pfam" id="PF08442">
    <property type="entry name" value="ATP-grasp_2"/>
    <property type="match status" value="1"/>
</dbReference>
<dbReference type="Pfam" id="PF00549">
    <property type="entry name" value="Ligase_CoA"/>
    <property type="match status" value="1"/>
</dbReference>
<dbReference type="PIRSF" id="PIRSF001554">
    <property type="entry name" value="SucCS_beta"/>
    <property type="match status" value="1"/>
</dbReference>
<dbReference type="SUPFAM" id="SSF56059">
    <property type="entry name" value="Glutathione synthetase ATP-binding domain-like"/>
    <property type="match status" value="1"/>
</dbReference>
<dbReference type="SUPFAM" id="SSF52210">
    <property type="entry name" value="Succinyl-CoA synthetase domains"/>
    <property type="match status" value="1"/>
</dbReference>
<dbReference type="PROSITE" id="PS50975">
    <property type="entry name" value="ATP_GRASP"/>
    <property type="match status" value="1"/>
</dbReference>
<comment type="function">
    <text evidence="1">Succinyl-CoA synthetase functions in the citric acid cycle (TCA), coupling the hydrolysis of succinyl-CoA to the synthesis of either ATP or GTP and thus represents the only step of substrate-level phosphorylation in the TCA. The beta subunit provides nucleotide specificity of the enzyme and binds the substrate succinate, while the binding sites for coenzyme A and phosphate are found in the alpha subunit.</text>
</comment>
<comment type="catalytic activity">
    <reaction evidence="1">
        <text>succinate + ATP + CoA = succinyl-CoA + ADP + phosphate</text>
        <dbReference type="Rhea" id="RHEA:17661"/>
        <dbReference type="ChEBI" id="CHEBI:30031"/>
        <dbReference type="ChEBI" id="CHEBI:30616"/>
        <dbReference type="ChEBI" id="CHEBI:43474"/>
        <dbReference type="ChEBI" id="CHEBI:57287"/>
        <dbReference type="ChEBI" id="CHEBI:57292"/>
        <dbReference type="ChEBI" id="CHEBI:456216"/>
        <dbReference type="EC" id="6.2.1.5"/>
    </reaction>
    <physiologicalReaction direction="right-to-left" evidence="1">
        <dbReference type="Rhea" id="RHEA:17663"/>
    </physiologicalReaction>
</comment>
<comment type="catalytic activity">
    <reaction evidence="1">
        <text>GTP + succinate + CoA = succinyl-CoA + GDP + phosphate</text>
        <dbReference type="Rhea" id="RHEA:22120"/>
        <dbReference type="ChEBI" id="CHEBI:30031"/>
        <dbReference type="ChEBI" id="CHEBI:37565"/>
        <dbReference type="ChEBI" id="CHEBI:43474"/>
        <dbReference type="ChEBI" id="CHEBI:57287"/>
        <dbReference type="ChEBI" id="CHEBI:57292"/>
        <dbReference type="ChEBI" id="CHEBI:58189"/>
    </reaction>
    <physiologicalReaction direction="right-to-left" evidence="1">
        <dbReference type="Rhea" id="RHEA:22122"/>
    </physiologicalReaction>
</comment>
<comment type="cofactor">
    <cofactor evidence="1">
        <name>Mg(2+)</name>
        <dbReference type="ChEBI" id="CHEBI:18420"/>
    </cofactor>
    <text evidence="1">Binds 1 Mg(2+) ion per subunit.</text>
</comment>
<comment type="pathway">
    <text evidence="1">Carbohydrate metabolism; tricarboxylic acid cycle; succinate from succinyl-CoA (ligase route): step 1/1.</text>
</comment>
<comment type="subunit">
    <text evidence="1">Heterotetramer of two alpha and two beta subunits.</text>
</comment>
<comment type="similarity">
    <text evidence="1">Belongs to the succinate/malate CoA ligase beta subunit family.</text>
</comment>
<feature type="chain" id="PRO_1000082008" description="Succinate--CoA ligase [ADP-forming] subunit beta">
    <location>
        <begin position="1"/>
        <end position="386"/>
    </location>
</feature>
<feature type="domain" description="ATP-grasp" evidence="1">
    <location>
        <begin position="9"/>
        <end position="244"/>
    </location>
</feature>
<feature type="binding site" evidence="1">
    <location>
        <position position="46"/>
    </location>
    <ligand>
        <name>ATP</name>
        <dbReference type="ChEBI" id="CHEBI:30616"/>
    </ligand>
</feature>
<feature type="binding site" evidence="1">
    <location>
        <begin position="53"/>
        <end position="55"/>
    </location>
    <ligand>
        <name>ATP</name>
        <dbReference type="ChEBI" id="CHEBI:30616"/>
    </ligand>
</feature>
<feature type="binding site" evidence="1">
    <location>
        <position position="99"/>
    </location>
    <ligand>
        <name>ATP</name>
        <dbReference type="ChEBI" id="CHEBI:30616"/>
    </ligand>
</feature>
<feature type="binding site" evidence="1">
    <location>
        <position position="102"/>
    </location>
    <ligand>
        <name>ATP</name>
        <dbReference type="ChEBI" id="CHEBI:30616"/>
    </ligand>
</feature>
<feature type="binding site" evidence="1">
    <location>
        <position position="107"/>
    </location>
    <ligand>
        <name>ATP</name>
        <dbReference type="ChEBI" id="CHEBI:30616"/>
    </ligand>
</feature>
<feature type="binding site" evidence="1">
    <location>
        <position position="199"/>
    </location>
    <ligand>
        <name>Mg(2+)</name>
        <dbReference type="ChEBI" id="CHEBI:18420"/>
    </ligand>
</feature>
<feature type="binding site" evidence="1">
    <location>
        <position position="213"/>
    </location>
    <ligand>
        <name>Mg(2+)</name>
        <dbReference type="ChEBI" id="CHEBI:18420"/>
    </ligand>
</feature>
<feature type="binding site" evidence="1">
    <location>
        <position position="264"/>
    </location>
    <ligand>
        <name>substrate</name>
        <note>ligand shared with subunit alpha</note>
    </ligand>
</feature>
<feature type="binding site" evidence="1">
    <location>
        <begin position="321"/>
        <end position="323"/>
    </location>
    <ligand>
        <name>substrate</name>
        <note>ligand shared with subunit alpha</note>
    </ligand>
</feature>
<evidence type="ECO:0000255" key="1">
    <source>
        <dbReference type="HAMAP-Rule" id="MF_00558"/>
    </source>
</evidence>
<keyword id="KW-0067">ATP-binding</keyword>
<keyword id="KW-0436">Ligase</keyword>
<keyword id="KW-0460">Magnesium</keyword>
<keyword id="KW-0479">Metal-binding</keyword>
<keyword id="KW-0547">Nucleotide-binding</keyword>
<keyword id="KW-0816">Tricarboxylic acid cycle</keyword>
<reference key="1">
    <citation type="journal article" date="2008" name="Chem. Biol. Interact.">
        <title>Extending the Bacillus cereus group genomics to putative food-borne pathogens of different toxicity.</title>
        <authorList>
            <person name="Lapidus A."/>
            <person name="Goltsman E."/>
            <person name="Auger S."/>
            <person name="Galleron N."/>
            <person name="Segurens B."/>
            <person name="Dossat C."/>
            <person name="Land M.L."/>
            <person name="Broussolle V."/>
            <person name="Brillard J."/>
            <person name="Guinebretiere M.-H."/>
            <person name="Sanchis V."/>
            <person name="Nguen-the C."/>
            <person name="Lereclus D."/>
            <person name="Richardson P."/>
            <person name="Wincker P."/>
            <person name="Weissenbach J."/>
            <person name="Ehrlich S.D."/>
            <person name="Sorokin A."/>
        </authorList>
    </citation>
    <scope>NUCLEOTIDE SEQUENCE [LARGE SCALE GENOMIC DNA]</scope>
    <source>
        <strain>DSM 22905 / CIP 110041 / 391-98 / NVH 391-98</strain>
    </source>
</reference>
<proteinExistence type="inferred from homology"/>
<gene>
    <name evidence="1" type="primary">sucC</name>
    <name type="ordered locus">Bcer98_2488</name>
</gene>
<organism>
    <name type="scientific">Bacillus cytotoxicus (strain DSM 22905 / CIP 110041 / 391-98 / NVH 391-98)</name>
    <dbReference type="NCBI Taxonomy" id="315749"/>
    <lineage>
        <taxon>Bacteria</taxon>
        <taxon>Bacillati</taxon>
        <taxon>Bacillota</taxon>
        <taxon>Bacilli</taxon>
        <taxon>Bacillales</taxon>
        <taxon>Bacillaceae</taxon>
        <taxon>Bacillus</taxon>
        <taxon>Bacillus cereus group</taxon>
    </lineage>
</organism>
<protein>
    <recommendedName>
        <fullName evidence="1">Succinate--CoA ligase [ADP-forming] subunit beta</fullName>
        <ecNumber evidence="1">6.2.1.5</ecNumber>
    </recommendedName>
    <alternativeName>
        <fullName evidence="1">Succinyl-CoA synthetase subunit beta</fullName>
        <shortName evidence="1">SCS-beta</shortName>
    </alternativeName>
</protein>
<sequence length="386" mass="41739">MNIHEYQGKAILRSYGVSVPNGKVAFTVEEAVEAAKELGTDVCVVKAQIHAGGRGKAGGVKVAKNLEEVRTYAENILGSTLVTHQTGPEGKEVKRLLIEEGCDIKKEYYVGLVLDRATSQVVLMASEEGGTEIEEVAEKTPEKIFKEYIDPAVGLQGFQARRIAFHINIPKELVGQAVKFMMGLYRVFIEKDCSIAEINPLVTTGDGKVMALDAKLNFDSNALYRHKDILELRDLDEEDPKEIEASKYDLNYIPLDGNIGCMVNGAGLAMATMDIIKHYHGDPANFLDVGGGATAEKVTEAFKIILSDKNVKGIFVNIFGGIMKCDVIAEGVVEATKQVGLELPLVVRLEGTNVELGKKILNESGLNIVAAESMADGAQKIVSLVG</sequence>
<accession>A7GRG6</accession>